<proteinExistence type="evidence at transcript level"/>
<comment type="function">
    <text evidence="2">Plays a role in preventing exon skipping, ensuring the accuracy of splicing and regulating alternative splicing. Interacts with other spliceosomal components, via the RS domains, to form a bridge between the 5'- and 3'-splice site binding components, U1 snRNP and U2AF. Can stimulate binding of U1 snRNP to a 5'-splice site-containing pre-mRNA. Binds to purine-rich RNA sequences, either the octamer, 5'-RGAAGAAC-3' (r=A or G) or the decamers, AGGACAGAGC/AGGACGAAGC. Binds preferentially to the 5'-CGAGGCG-3' motif in vitro. Three copies of the octamer constitute a powerful splicing enhancer in vitro, the ASF/SF2 splicing enhancer (ASE) which can specifically activate ASE-dependent splicing. May function as export adapter involved in mRNA nuclear export through the TAP/NXF1 pathway (By similarity).</text>
</comment>
<comment type="subunit">
    <text evidence="2 3">Consists of two polypeptides of p32 and p33. Identified in the spliceosome C complex. Component of a ribonucleoprotein complex containing mRNAs and RNA-binding proteins including DDX5, HNRNPH2 and SRSF1 as well as splicing regulator ARVCF. In vitro, self-associates and binds SRSF2, SNRNP70 and U2AF1 but not U2AF2. Binds SREK1/SFRS12. Interacts with SAFB/SAFB1. Interacts with PSIP1/LEDGF. Interacts with RSRC1 (via Arg/Ser-rich domain). Interacts with ZRSR2/U2AF1-RS2. Interacts with CCDC55 (via C-terminus). Interacts with SRPK1 and a sliding docking interaction is essential for its sequential and processive phosphorylation by SRPK1. Interacts with NXF1. Interacts with CCNL1, CCNL2 and CDK11B. Interacts with RRP1B. Interacts (when phosphorylated in its RS domain) with TNPO3; promoting nuclear import. Interacts with ILDR1 (via C-terminus) and ILDR2.</text>
</comment>
<comment type="subcellular location">
    <subcellularLocation>
        <location evidence="2">Cytoplasm</location>
    </subcellularLocation>
    <subcellularLocation>
        <location evidence="2">Nucleus speckle</location>
    </subcellularLocation>
    <text evidence="2">In nuclear speckles. Shuttles between the nucleus and the cytoplasm. Nuclear import is mediated via interaction with TNPO3.</text>
</comment>
<comment type="domain">
    <text evidence="2">The RRM 2 domain plays an important role in governing both the binding mode and the phosphorylation mechanism of the RS domain by SRPK1. RS domain and RRM 2 are uniquely positioned to initiate a highly directional (C-terminus to N-terminus) phosphorylation reaction in which the RS domain slides through an extended electronegative channel separating the docking groove of SRPK1 and the active site. RRM 2 binds toward the periphery of the active site and guides the directional phosphorylation mechanism. Both the RS domain and an RRM domain are required for nucleocytoplasmic shuttling (By similarity).</text>
</comment>
<comment type="PTM">
    <text evidence="2">Phosphorylated by CLK1, CLK2, CLK3 and CLK4. Phosphorylated by SRPK1 at multiple serines in its RS domain via a directional (C-terminal to N-terminal) and a dual-track mechanism incorporating both processive phosphorylation (in which the kinase stays attached to the substrate after each round of phosphorylation) and distributive phosphorylation steps (in which the kinase and substrate dissociate after each phosphorylation event). The RS domain of SRSF1 binds to a docking groove in the large lobe of the kinase domain of SRPK1 and this induces certain structural changes in SRPK1 and/or RRM 2 domain of SRSF1, allowing RRM 2 to bind the kinase and initiate phosphorylation. The cycles continue for several phosphorylation steps in a processive manner (steps 1-8) until the last few phosphorylation steps (approximately steps 9-12). During that time, a mechanical stress induces the unfolding of the beta-4 motif in RRM 2, which then docks at the docking groove of SRPK1. This also signals RRM 2 to begin to dissociate, which facilitates SRSF1 dissociation after phosphorylation is completed (By similarity).</text>
</comment>
<comment type="PTM">
    <text evidence="2">Asymmetrically dimethylated at arginines, probably by PRMT1, methylation promotes localization to nuclear speckles.</text>
</comment>
<comment type="similarity">
    <text evidence="7">Belongs to the splicing factor SR family.</text>
</comment>
<feature type="initiator methionine" description="Removed" evidence="2">
    <location>
        <position position="1"/>
    </location>
</feature>
<feature type="chain" id="PRO_0000081913" description="Serine/arginine-rich splicing factor 1">
    <location>
        <begin position="2"/>
        <end position="248"/>
    </location>
</feature>
<feature type="domain" description="RRM 1" evidence="5">
    <location>
        <begin position="16"/>
        <end position="91"/>
    </location>
</feature>
<feature type="domain" description="RRM 2" evidence="5">
    <location>
        <begin position="121"/>
        <end position="195"/>
    </location>
</feature>
<feature type="region of interest" description="Disordered" evidence="6">
    <location>
        <begin position="88"/>
        <end position="134"/>
    </location>
</feature>
<feature type="region of interest" description="Disordered" evidence="6">
    <location>
        <begin position="191"/>
        <end position="248"/>
    </location>
</feature>
<feature type="region of interest" description="Interaction with SAFB1" evidence="1">
    <location>
        <begin position="198"/>
        <end position="247"/>
    </location>
</feature>
<feature type="compositionally biased region" description="Gly residues" evidence="6">
    <location>
        <begin position="93"/>
        <end position="108"/>
    </location>
</feature>
<feature type="compositionally biased region" description="Basic residues" evidence="6">
    <location>
        <begin position="205"/>
        <end position="248"/>
    </location>
</feature>
<feature type="modified residue" description="N-acetylserine" evidence="2 4">
    <location>
        <position position="2"/>
    </location>
</feature>
<feature type="modified residue" description="Phosphoserine" evidence="2">
    <location>
        <position position="2"/>
    </location>
</feature>
<feature type="modified residue" description="N6-acetyllysine; alternate" evidence="2">
    <location>
        <position position="38"/>
    </location>
</feature>
<feature type="modified residue" description="Asymmetric dimethylarginine; alternate" evidence="2">
    <location>
        <position position="93"/>
    </location>
</feature>
<feature type="modified residue" description="Omega-N-methylarginine; alternate" evidence="2">
    <location>
        <position position="93"/>
    </location>
</feature>
<feature type="modified residue" description="Asymmetric dimethylarginine; alternate" evidence="2">
    <location>
        <position position="97"/>
    </location>
</feature>
<feature type="modified residue" description="Omega-N-methylarginine; alternate" evidence="2">
    <location>
        <position position="97"/>
    </location>
</feature>
<feature type="modified residue" description="Asymmetric dimethylarginine; alternate" evidence="2">
    <location>
        <position position="109"/>
    </location>
</feature>
<feature type="modified residue" description="Omega-N-methylarginine; alternate" evidence="2">
    <location>
        <position position="109"/>
    </location>
</feature>
<feature type="modified residue" description="Omega-N-methylarginine" evidence="2">
    <location>
        <position position="111"/>
    </location>
</feature>
<feature type="modified residue" description="Phosphoserine" evidence="2">
    <location>
        <position position="133"/>
    </location>
</feature>
<feature type="modified residue" description="N6-acetyllysine" evidence="2">
    <location>
        <position position="179"/>
    </location>
</feature>
<feature type="modified residue" description="Phosphoserine" evidence="2">
    <location>
        <position position="199"/>
    </location>
</feature>
<feature type="modified residue" description="Phosphoserine" evidence="2">
    <location>
        <position position="201"/>
    </location>
</feature>
<feature type="modified residue" description="Phosphotyrosine" evidence="2">
    <location>
        <position position="202"/>
    </location>
</feature>
<feature type="modified residue" description="Phosphoserine" evidence="2">
    <location>
        <position position="205"/>
    </location>
</feature>
<feature type="modified residue" description="Phosphoserine" evidence="2">
    <location>
        <position position="207"/>
    </location>
</feature>
<feature type="modified residue" description="Phosphoserine" evidence="2">
    <location>
        <position position="209"/>
    </location>
</feature>
<feature type="modified residue" description="Phosphoserine" evidence="2">
    <location>
        <position position="231"/>
    </location>
</feature>
<feature type="modified residue" description="Phosphoserine" evidence="2">
    <location>
        <position position="234"/>
    </location>
</feature>
<feature type="modified residue" description="Phosphoserine" evidence="2">
    <location>
        <position position="238"/>
    </location>
</feature>
<feature type="cross-link" description="Glycyl lysine isopeptide (Lys-Gly) (interchain with G-Cter in SUMO2)" evidence="2">
    <location>
        <position position="30"/>
    </location>
</feature>
<feature type="cross-link" description="Glycyl lysine isopeptide (Lys-Gly) (interchain with G-Cter in SUMO2); alternate" evidence="2">
    <location>
        <position position="38"/>
    </location>
</feature>
<evidence type="ECO:0000250" key="1"/>
<evidence type="ECO:0000250" key="2">
    <source>
        <dbReference type="UniProtKB" id="Q07955"/>
    </source>
</evidence>
<evidence type="ECO:0000250" key="3">
    <source>
        <dbReference type="UniProtKB" id="Q6PDM2"/>
    </source>
</evidence>
<evidence type="ECO:0000255" key="4"/>
<evidence type="ECO:0000255" key="5">
    <source>
        <dbReference type="PROSITE-ProRule" id="PRU00176"/>
    </source>
</evidence>
<evidence type="ECO:0000256" key="6">
    <source>
        <dbReference type="SAM" id="MobiDB-lite"/>
    </source>
</evidence>
<evidence type="ECO:0000305" key="7"/>
<reference key="1">
    <citation type="submission" date="2004-11" db="EMBL/GenBank/DDBJ databases">
        <authorList>
            <consortium name="The German cDNA consortium"/>
        </authorList>
    </citation>
    <scope>NUCLEOTIDE SEQUENCE [LARGE SCALE MRNA]</scope>
    <source>
        <tissue>Kidney</tissue>
    </source>
</reference>
<dbReference type="EMBL" id="CR860145">
    <property type="protein sequence ID" value="CAH92288.1"/>
    <property type="molecule type" value="mRNA"/>
</dbReference>
<dbReference type="RefSeq" id="NP_001126337.1">
    <property type="nucleotide sequence ID" value="NM_001132865.1"/>
</dbReference>
<dbReference type="BMRB" id="Q5R7H2"/>
<dbReference type="SMR" id="Q5R7H2"/>
<dbReference type="FunCoup" id="Q5R7H2">
    <property type="interactions" value="4615"/>
</dbReference>
<dbReference type="STRING" id="9601.ENSPPYP00000024624"/>
<dbReference type="GeneID" id="100173318"/>
<dbReference type="KEGG" id="pon:100173318"/>
<dbReference type="CTD" id="6426"/>
<dbReference type="eggNOG" id="KOG0105">
    <property type="taxonomic scope" value="Eukaryota"/>
</dbReference>
<dbReference type="InParanoid" id="Q5R7H2"/>
<dbReference type="OrthoDB" id="1099063at2759"/>
<dbReference type="Proteomes" id="UP000001595">
    <property type="component" value="Unplaced"/>
</dbReference>
<dbReference type="GO" id="GO:0005737">
    <property type="term" value="C:cytoplasm"/>
    <property type="evidence" value="ECO:0000250"/>
    <property type="project" value="UniProtKB"/>
</dbReference>
<dbReference type="GO" id="GO:0016607">
    <property type="term" value="C:nuclear speck"/>
    <property type="evidence" value="ECO:0000250"/>
    <property type="project" value="UniProtKB"/>
</dbReference>
<dbReference type="GO" id="GO:0005654">
    <property type="term" value="C:nucleoplasm"/>
    <property type="evidence" value="ECO:0000250"/>
    <property type="project" value="UniProtKB"/>
</dbReference>
<dbReference type="GO" id="GO:0005634">
    <property type="term" value="C:nucleus"/>
    <property type="evidence" value="ECO:0000250"/>
    <property type="project" value="UniProtKB"/>
</dbReference>
<dbReference type="GO" id="GO:0005681">
    <property type="term" value="C:spliceosomal complex"/>
    <property type="evidence" value="ECO:0007669"/>
    <property type="project" value="UniProtKB-KW"/>
</dbReference>
<dbReference type="GO" id="GO:0003729">
    <property type="term" value="F:mRNA binding"/>
    <property type="evidence" value="ECO:0007669"/>
    <property type="project" value="TreeGrafter"/>
</dbReference>
<dbReference type="GO" id="GO:0003723">
    <property type="term" value="F:RNA binding"/>
    <property type="evidence" value="ECO:0000250"/>
    <property type="project" value="UniProtKB"/>
</dbReference>
<dbReference type="GO" id="GO:0000395">
    <property type="term" value="P:mRNA 5'-splice site recognition"/>
    <property type="evidence" value="ECO:0000250"/>
    <property type="project" value="UniProtKB"/>
</dbReference>
<dbReference type="GO" id="GO:0051028">
    <property type="term" value="P:mRNA transport"/>
    <property type="evidence" value="ECO:0007669"/>
    <property type="project" value="UniProtKB-KW"/>
</dbReference>
<dbReference type="GO" id="GO:0043484">
    <property type="term" value="P:regulation of RNA splicing"/>
    <property type="evidence" value="ECO:0000250"/>
    <property type="project" value="UniProtKB"/>
</dbReference>
<dbReference type="CDD" id="cd12597">
    <property type="entry name" value="RRM1_SRSF1"/>
    <property type="match status" value="1"/>
</dbReference>
<dbReference type="CDD" id="cd12767">
    <property type="entry name" value="RRM2_SRSF1"/>
    <property type="match status" value="1"/>
</dbReference>
<dbReference type="FunFam" id="3.30.70.330:FF:000053">
    <property type="entry name" value="Serine/arginine-rich splicing factor 1"/>
    <property type="match status" value="1"/>
</dbReference>
<dbReference type="FunFam" id="3.30.70.330:FF:000170">
    <property type="entry name" value="Serine/arginine-rich splicing factor 1"/>
    <property type="match status" value="1"/>
</dbReference>
<dbReference type="Gene3D" id="3.30.70.330">
    <property type="match status" value="2"/>
</dbReference>
<dbReference type="InterPro" id="IPR012677">
    <property type="entry name" value="Nucleotide-bd_a/b_plait_sf"/>
</dbReference>
<dbReference type="InterPro" id="IPR035979">
    <property type="entry name" value="RBD_domain_sf"/>
</dbReference>
<dbReference type="InterPro" id="IPR000504">
    <property type="entry name" value="RRM_dom"/>
</dbReference>
<dbReference type="InterPro" id="IPR050374">
    <property type="entry name" value="RRT5_SRSF_SR"/>
</dbReference>
<dbReference type="InterPro" id="IPR034520">
    <property type="entry name" value="SRSF1_RRM1"/>
</dbReference>
<dbReference type="InterPro" id="IPR029538">
    <property type="entry name" value="SRSF1_RRM2"/>
</dbReference>
<dbReference type="PANTHER" id="PTHR23003">
    <property type="entry name" value="RNA RECOGNITION MOTIF RRM DOMAIN CONTAINING PROTEIN"/>
    <property type="match status" value="1"/>
</dbReference>
<dbReference type="PANTHER" id="PTHR23003:SF66">
    <property type="entry name" value="SERINE_ARGININE-RICH SPLICING FACTOR 1"/>
    <property type="match status" value="1"/>
</dbReference>
<dbReference type="Pfam" id="PF00076">
    <property type="entry name" value="RRM_1"/>
    <property type="match status" value="2"/>
</dbReference>
<dbReference type="SMART" id="SM00360">
    <property type="entry name" value="RRM"/>
    <property type="match status" value="2"/>
</dbReference>
<dbReference type="SUPFAM" id="SSF54928">
    <property type="entry name" value="RNA-binding domain, RBD"/>
    <property type="match status" value="1"/>
</dbReference>
<dbReference type="PROSITE" id="PS50102">
    <property type="entry name" value="RRM"/>
    <property type="match status" value="2"/>
</dbReference>
<sequence length="248" mass="27772">MSGGGVIRGPAGNNDCRIYVGNLPPDIRTKDIEDVFYKYGAIRDIDLKNRRGGPPFAFVEFEDPRDAEDAVYGRDGYDYDGYRLRVEFPRSGRGTGRGGGGGGGGGAPRGRYGPPSRRSENRVVVSGLPPSGSWQDLKDHMREAGDVCYADVYRDGTGVVEFVRKEDMTYAVRKLDNTKFRSHEGETAYIRVKVDGPRSPSYGRSRSRSRSRSRNRSRSNSRSRSYSPRRSRGSPRYSPRHSRSRSRT</sequence>
<name>SRSF1_PONAB</name>
<organism>
    <name type="scientific">Pongo abelii</name>
    <name type="common">Sumatran orangutan</name>
    <name type="synonym">Pongo pygmaeus abelii</name>
    <dbReference type="NCBI Taxonomy" id="9601"/>
    <lineage>
        <taxon>Eukaryota</taxon>
        <taxon>Metazoa</taxon>
        <taxon>Chordata</taxon>
        <taxon>Craniata</taxon>
        <taxon>Vertebrata</taxon>
        <taxon>Euteleostomi</taxon>
        <taxon>Mammalia</taxon>
        <taxon>Eutheria</taxon>
        <taxon>Euarchontoglires</taxon>
        <taxon>Primates</taxon>
        <taxon>Haplorrhini</taxon>
        <taxon>Catarrhini</taxon>
        <taxon>Hominidae</taxon>
        <taxon>Pongo</taxon>
    </lineage>
</organism>
<protein>
    <recommendedName>
        <fullName>Serine/arginine-rich splicing factor 1</fullName>
    </recommendedName>
    <alternativeName>
        <fullName>Splicing factor, arginine/serine-rich 1</fullName>
    </alternativeName>
</protein>
<gene>
    <name type="primary">SRSF1</name>
    <name type="synonym">SFRS1</name>
</gene>
<accession>Q5R7H2</accession>
<keyword id="KW-0007">Acetylation</keyword>
<keyword id="KW-0963">Cytoplasm</keyword>
<keyword id="KW-1017">Isopeptide bond</keyword>
<keyword id="KW-0488">Methylation</keyword>
<keyword id="KW-0507">mRNA processing</keyword>
<keyword id="KW-0508">mRNA splicing</keyword>
<keyword id="KW-0509">mRNA transport</keyword>
<keyword id="KW-0539">Nucleus</keyword>
<keyword id="KW-0597">Phosphoprotein</keyword>
<keyword id="KW-1185">Reference proteome</keyword>
<keyword id="KW-0677">Repeat</keyword>
<keyword id="KW-0694">RNA-binding</keyword>
<keyword id="KW-0747">Spliceosome</keyword>
<keyword id="KW-0813">Transport</keyword>
<keyword id="KW-0832">Ubl conjugation</keyword>